<accession>Q8FJK9</accession>
<reference key="1">
    <citation type="journal article" date="2002" name="Proc. Natl. Acad. Sci. U.S.A.">
        <title>Extensive mosaic structure revealed by the complete genome sequence of uropathogenic Escherichia coli.</title>
        <authorList>
            <person name="Welch R.A."/>
            <person name="Burland V."/>
            <person name="Plunkett G. III"/>
            <person name="Redford P."/>
            <person name="Roesch P."/>
            <person name="Rasko D."/>
            <person name="Buckles E.L."/>
            <person name="Liou S.-R."/>
            <person name="Boutin A."/>
            <person name="Hackett J."/>
            <person name="Stroud D."/>
            <person name="Mayhew G.F."/>
            <person name="Rose D.J."/>
            <person name="Zhou S."/>
            <person name="Schwartz D.C."/>
            <person name="Perna N.T."/>
            <person name="Mobley H.L.T."/>
            <person name="Donnenberg M.S."/>
            <person name="Blattner F.R."/>
        </authorList>
    </citation>
    <scope>NUCLEOTIDE SEQUENCE [LARGE SCALE GENOMIC DNA]</scope>
    <source>
        <strain>CFT073 / ATCC 700928 / UPEC</strain>
    </source>
</reference>
<feature type="chain" id="PRO_0000279991" description="Glutathione transport system permease protein GsiC">
    <location>
        <begin position="1"/>
        <end position="306"/>
    </location>
</feature>
<feature type="topological domain" description="Cytoplasmic" evidence="2">
    <location>
        <begin position="1"/>
        <end position="8"/>
    </location>
</feature>
<feature type="transmembrane region" description="Helical" evidence="3">
    <location>
        <begin position="9"/>
        <end position="29"/>
    </location>
</feature>
<feature type="topological domain" description="Periplasmic" evidence="2">
    <location>
        <begin position="30"/>
        <end position="102"/>
    </location>
</feature>
<feature type="transmembrane region" description="Helical" evidence="3">
    <location>
        <begin position="103"/>
        <end position="123"/>
    </location>
</feature>
<feature type="topological domain" description="Cytoplasmic" evidence="2">
    <location>
        <begin position="124"/>
        <end position="134"/>
    </location>
</feature>
<feature type="transmembrane region" description="Helical" evidence="3">
    <location>
        <begin position="135"/>
        <end position="155"/>
    </location>
</feature>
<feature type="topological domain" description="Periplasmic" evidence="2">
    <location>
        <begin position="156"/>
        <end position="168"/>
    </location>
</feature>
<feature type="transmembrane region" description="Helical" evidence="3">
    <location>
        <begin position="169"/>
        <end position="189"/>
    </location>
</feature>
<feature type="topological domain" description="Cytoplasmic" evidence="2">
    <location>
        <begin position="190"/>
        <end position="228"/>
    </location>
</feature>
<feature type="transmembrane region" description="Helical" evidence="3">
    <location>
        <begin position="229"/>
        <end position="249"/>
    </location>
</feature>
<feature type="topological domain" description="Periplasmic" evidence="2">
    <location>
        <begin position="250"/>
        <end position="277"/>
    </location>
</feature>
<feature type="transmembrane region" description="Helical" evidence="3">
    <location>
        <begin position="278"/>
        <end position="298"/>
    </location>
</feature>
<feature type="topological domain" description="Cytoplasmic" evidence="2">
    <location>
        <begin position="299"/>
        <end position="306"/>
    </location>
</feature>
<feature type="domain" description="ABC transmembrane type-1" evidence="3">
    <location>
        <begin position="95"/>
        <end position="292"/>
    </location>
</feature>
<organism>
    <name type="scientific">Escherichia coli O6:H1 (strain CFT073 / ATCC 700928 / UPEC)</name>
    <dbReference type="NCBI Taxonomy" id="199310"/>
    <lineage>
        <taxon>Bacteria</taxon>
        <taxon>Pseudomonadati</taxon>
        <taxon>Pseudomonadota</taxon>
        <taxon>Gammaproteobacteria</taxon>
        <taxon>Enterobacterales</taxon>
        <taxon>Enterobacteriaceae</taxon>
        <taxon>Escherichia</taxon>
    </lineage>
</organism>
<comment type="function">
    <text evidence="1">Part of the ABC transporter complex GsiABCD involved in glutathione import. Probably responsible for the translocation of the substrate across the membrane.</text>
</comment>
<comment type="subunit">
    <text evidence="1">The complex is composed of two ATP-binding proteins (GsiA), two transmembrane proteins (GsiC and GsiD) and a solute-binding protein (GsiB).</text>
</comment>
<comment type="subcellular location">
    <subcellularLocation>
        <location evidence="1">Cell inner membrane</location>
        <topology evidence="2">Multi-pass membrane protein</topology>
    </subcellularLocation>
</comment>
<comment type="similarity">
    <text evidence="4">Belongs to the binding-protein-dependent transport system permease family.</text>
</comment>
<evidence type="ECO:0000250" key="1">
    <source>
        <dbReference type="UniProtKB" id="P75798"/>
    </source>
</evidence>
<evidence type="ECO:0000255" key="2"/>
<evidence type="ECO:0000255" key="3">
    <source>
        <dbReference type="PROSITE-ProRule" id="PRU00441"/>
    </source>
</evidence>
<evidence type="ECO:0000305" key="4"/>
<proteinExistence type="inferred from homology"/>
<keyword id="KW-0997">Cell inner membrane</keyword>
<keyword id="KW-1003">Cell membrane</keyword>
<keyword id="KW-0472">Membrane</keyword>
<keyword id="KW-1185">Reference proteome</keyword>
<keyword id="KW-0812">Transmembrane</keyword>
<keyword id="KW-1133">Transmembrane helix</keyword>
<keyword id="KW-0813">Transport</keyword>
<sequence length="306" mass="34032">MLNYVIKRLLGLIPTLFIVSVLVFLFVHMLPGDPARLIAGPEADAQVIELVRQQLGLDQPLYHQFWHYISNAVQGDLGLSMVSRRPVADEIASRFMPTLWLTITSMVWAVIFGMAAGIIAAVWRNRWPDRLSMTIAVSGISFPAFALGMLLIQVFSVELGWLPTVGADSWQHYILPSLTLGAAVAAVMARFTRASFVDVLSEDYMRTARAKGVSETWVVLKHGLRNAMIPVVTMMGLQFGFLLGGSIVVEKVFNWPGLGRLLVDSVEMRDYPVIQAEILLFSLEFILINLVVDVLYAAINPAIRYK</sequence>
<protein>
    <recommendedName>
        <fullName evidence="1">Glutathione transport system permease protein GsiC</fullName>
    </recommendedName>
</protein>
<name>GSIC_ECOL6</name>
<gene>
    <name evidence="1" type="primary">gsiC</name>
    <name type="ordered locus">c0916</name>
</gene>
<dbReference type="EMBL" id="AE014075">
    <property type="protein sequence ID" value="AAN79389.1"/>
    <property type="molecule type" value="Genomic_DNA"/>
</dbReference>
<dbReference type="RefSeq" id="WP_000936053.1">
    <property type="nucleotide sequence ID" value="NC_004431.1"/>
</dbReference>
<dbReference type="SMR" id="Q8FJK9"/>
<dbReference type="STRING" id="199310.c0916"/>
<dbReference type="KEGG" id="ecc:c0916"/>
<dbReference type="eggNOG" id="COG0601">
    <property type="taxonomic scope" value="Bacteria"/>
</dbReference>
<dbReference type="HOGENOM" id="CLU_036879_0_0_6"/>
<dbReference type="BioCyc" id="ECOL199310:C0916-MONOMER"/>
<dbReference type="Proteomes" id="UP000001410">
    <property type="component" value="Chromosome"/>
</dbReference>
<dbReference type="GO" id="GO:0005886">
    <property type="term" value="C:plasma membrane"/>
    <property type="evidence" value="ECO:0007669"/>
    <property type="project" value="UniProtKB-SubCell"/>
</dbReference>
<dbReference type="GO" id="GO:0055085">
    <property type="term" value="P:transmembrane transport"/>
    <property type="evidence" value="ECO:0007669"/>
    <property type="project" value="InterPro"/>
</dbReference>
<dbReference type="CDD" id="cd06261">
    <property type="entry name" value="TM_PBP2"/>
    <property type="match status" value="1"/>
</dbReference>
<dbReference type="FunFam" id="1.10.3720.10:FF:000024">
    <property type="entry name" value="Glutathione ABC transporter permease GsiC"/>
    <property type="match status" value="1"/>
</dbReference>
<dbReference type="Gene3D" id="1.10.3720.10">
    <property type="entry name" value="MetI-like"/>
    <property type="match status" value="1"/>
</dbReference>
<dbReference type="InterPro" id="IPR045621">
    <property type="entry name" value="BPD_transp_1_N"/>
</dbReference>
<dbReference type="InterPro" id="IPR000515">
    <property type="entry name" value="MetI-like"/>
</dbReference>
<dbReference type="InterPro" id="IPR035906">
    <property type="entry name" value="MetI-like_sf"/>
</dbReference>
<dbReference type="NCBIfam" id="NF011661">
    <property type="entry name" value="PRK15081.1"/>
    <property type="match status" value="1"/>
</dbReference>
<dbReference type="PANTHER" id="PTHR43163">
    <property type="entry name" value="DIPEPTIDE TRANSPORT SYSTEM PERMEASE PROTEIN DPPB-RELATED"/>
    <property type="match status" value="1"/>
</dbReference>
<dbReference type="PANTHER" id="PTHR43163:SF5">
    <property type="entry name" value="GLUTATHIONE TRANSPORT SYSTEM PERMEASE PROTEIN GSIC"/>
    <property type="match status" value="1"/>
</dbReference>
<dbReference type="Pfam" id="PF00528">
    <property type="entry name" value="BPD_transp_1"/>
    <property type="match status" value="1"/>
</dbReference>
<dbReference type="Pfam" id="PF19300">
    <property type="entry name" value="BPD_transp_1_N"/>
    <property type="match status" value="1"/>
</dbReference>
<dbReference type="SUPFAM" id="SSF161098">
    <property type="entry name" value="MetI-like"/>
    <property type="match status" value="1"/>
</dbReference>
<dbReference type="PROSITE" id="PS50928">
    <property type="entry name" value="ABC_TM1"/>
    <property type="match status" value="1"/>
</dbReference>